<keyword id="KW-0030">Aminoacyl-tRNA synthetase</keyword>
<keyword id="KW-0067">ATP-binding</keyword>
<keyword id="KW-0963">Cytoplasm</keyword>
<keyword id="KW-0436">Ligase</keyword>
<keyword id="KW-0479">Metal-binding</keyword>
<keyword id="KW-0547">Nucleotide-binding</keyword>
<keyword id="KW-0648">Protein biosynthesis</keyword>
<keyword id="KW-1185">Reference proteome</keyword>
<keyword id="KW-0862">Zinc</keyword>
<sequence length="942" mass="108694">MINYKNTLNLPYTLFPMRANLPVCEPTILERWYKDNLYEAIRHKKSKKKLFILHDGPPYVNGSIHLGHAVNKVLKDIILKYKTLTGYNAPYIPGWDCHGLPIELQVERLIGQLGVNVDPNEFRSICRNYVLDQIEIQKKDFVRLGVLGDWSRPYLTMDFKTEANIIRTLSKVISNGYFYKGTKPVHWCFQCCSVLAESEVEYNNHCSPAIDVAFFAVDNIRISKIFNIDLCQRVIELVIWTTTPWTLPSNQAISVHPDYSYQLIAINNSKYIIIAANLVNTVMQRIQCFSWRILGETSGNSLESLKFRHPFMSFDVPVVLSGHVALDSGTGVVHIAPNHGVDDYIIARKYNFKIVNIINETGHYVSNVHPMLDGVQVFQSNEIIIKLLNQSGSLLHVNHNYKHNYPYCWRHAVPVIFKATAQWFLSMDKYNLRNKLLQTIHQVDWIPNKGEYSIETMIVNRPDWCLSRQRVWGVPIPLFIHKKTSILHPRTIALMEVIAQHVEQNGIQAWWDLKTEDIIDNEEADQYEKVLDTLDVWFDSGSTHYSVIPERLEYRKQSPDLYLEGSDQYRGWFMSSLIISTVITGQAPYREVLTHGFTVDAQGRKMSKSLGNVISPQEIIKDFGADILRLWIASSDYSKEMAISNAILKHTIDVYRRIRNTARFCLANISDFDPEKDSVHPENMIELDCWAIDRALSVQLEVISDYNKYNFHNVIQRIMQFCSVEMGSFYLDVIKDRQYTTKKNSKERRSCQTALYHIIESMVRWIAPVLSFTADEIWRHIPGNRSKYVFTEEWYNGLFSISSKQIMNSHDWNTFLNVRSEVNKIVEQTRLNGIIGGSLDASVVLYATPELANTLRILGNELSFGLITSSAIVSDYCNGFNVTQYTQEGIPGLKIFLEKAKGKKCLRCWHYRLDIGQYKNYSNICARCVNNIVGPGEKRRFF</sequence>
<name>SYI_BLOPB</name>
<proteinExistence type="inferred from homology"/>
<reference key="1">
    <citation type="journal article" date="2005" name="Genome Res.">
        <title>Genome sequence of Blochmannia pennsylvanicus indicates parallel evolutionary trends among bacterial mutualists of insects.</title>
        <authorList>
            <person name="Degnan P.H."/>
            <person name="Lazarus A.B."/>
            <person name="Wernegreen J.J."/>
        </authorList>
    </citation>
    <scope>NUCLEOTIDE SEQUENCE [LARGE SCALE GENOMIC DNA]</scope>
    <source>
        <strain>BPEN</strain>
    </source>
</reference>
<comment type="function">
    <text evidence="1">Catalyzes the attachment of isoleucine to tRNA(Ile). As IleRS can inadvertently accommodate and process structurally similar amino acids such as valine, to avoid such errors it has two additional distinct tRNA(Ile)-dependent editing activities. One activity is designated as 'pretransfer' editing and involves the hydrolysis of activated Val-AMP. The other activity is designated 'posttransfer' editing and involves deacylation of mischarged Val-tRNA(Ile).</text>
</comment>
<comment type="catalytic activity">
    <reaction evidence="1">
        <text>tRNA(Ile) + L-isoleucine + ATP = L-isoleucyl-tRNA(Ile) + AMP + diphosphate</text>
        <dbReference type="Rhea" id="RHEA:11060"/>
        <dbReference type="Rhea" id="RHEA-COMP:9666"/>
        <dbReference type="Rhea" id="RHEA-COMP:9695"/>
        <dbReference type="ChEBI" id="CHEBI:30616"/>
        <dbReference type="ChEBI" id="CHEBI:33019"/>
        <dbReference type="ChEBI" id="CHEBI:58045"/>
        <dbReference type="ChEBI" id="CHEBI:78442"/>
        <dbReference type="ChEBI" id="CHEBI:78528"/>
        <dbReference type="ChEBI" id="CHEBI:456215"/>
        <dbReference type="EC" id="6.1.1.5"/>
    </reaction>
</comment>
<comment type="cofactor">
    <cofactor evidence="1">
        <name>Zn(2+)</name>
        <dbReference type="ChEBI" id="CHEBI:29105"/>
    </cofactor>
    <text evidence="1">Binds 1 zinc ion per subunit.</text>
</comment>
<comment type="subunit">
    <text evidence="1">Monomer.</text>
</comment>
<comment type="subcellular location">
    <subcellularLocation>
        <location evidence="1">Cytoplasm</location>
    </subcellularLocation>
</comment>
<comment type="domain">
    <text evidence="1">IleRS has two distinct active sites: one for aminoacylation and one for editing. The misactivated valine is translocated from the active site to the editing site, which sterically excludes the correctly activated isoleucine. The single editing site contains two valyl binding pockets, one specific for each substrate (Val-AMP or Val-tRNA(Ile)).</text>
</comment>
<comment type="similarity">
    <text evidence="1">Belongs to the class-I aminoacyl-tRNA synthetase family. IleS type 1 subfamily.</text>
</comment>
<evidence type="ECO:0000255" key="1">
    <source>
        <dbReference type="HAMAP-Rule" id="MF_02002"/>
    </source>
</evidence>
<organism>
    <name type="scientific">Blochmanniella pennsylvanica (strain BPEN)</name>
    <dbReference type="NCBI Taxonomy" id="291272"/>
    <lineage>
        <taxon>Bacteria</taxon>
        <taxon>Pseudomonadati</taxon>
        <taxon>Pseudomonadota</taxon>
        <taxon>Gammaproteobacteria</taxon>
        <taxon>Enterobacterales</taxon>
        <taxon>Enterobacteriaceae</taxon>
        <taxon>ant endosymbionts</taxon>
        <taxon>Candidatus Blochmanniella</taxon>
    </lineage>
</organism>
<accession>Q493S3</accession>
<dbReference type="EC" id="6.1.1.5" evidence="1"/>
<dbReference type="EMBL" id="CP000016">
    <property type="protein sequence ID" value="AAZ40762.1"/>
    <property type="molecule type" value="Genomic_DNA"/>
</dbReference>
<dbReference type="RefSeq" id="WP_011282669.1">
    <property type="nucleotide sequence ID" value="NC_007292.1"/>
</dbReference>
<dbReference type="SMR" id="Q493S3"/>
<dbReference type="STRING" id="291272.BPEN_122"/>
<dbReference type="KEGG" id="bpn:BPEN_122"/>
<dbReference type="eggNOG" id="COG0060">
    <property type="taxonomic scope" value="Bacteria"/>
</dbReference>
<dbReference type="HOGENOM" id="CLU_001493_7_1_6"/>
<dbReference type="OrthoDB" id="9810365at2"/>
<dbReference type="Proteomes" id="UP000007794">
    <property type="component" value="Chromosome"/>
</dbReference>
<dbReference type="GO" id="GO:0005829">
    <property type="term" value="C:cytosol"/>
    <property type="evidence" value="ECO:0007669"/>
    <property type="project" value="TreeGrafter"/>
</dbReference>
<dbReference type="GO" id="GO:0002161">
    <property type="term" value="F:aminoacyl-tRNA deacylase activity"/>
    <property type="evidence" value="ECO:0007669"/>
    <property type="project" value="InterPro"/>
</dbReference>
<dbReference type="GO" id="GO:0005524">
    <property type="term" value="F:ATP binding"/>
    <property type="evidence" value="ECO:0007669"/>
    <property type="project" value="UniProtKB-UniRule"/>
</dbReference>
<dbReference type="GO" id="GO:0004822">
    <property type="term" value="F:isoleucine-tRNA ligase activity"/>
    <property type="evidence" value="ECO:0007669"/>
    <property type="project" value="UniProtKB-UniRule"/>
</dbReference>
<dbReference type="GO" id="GO:0000049">
    <property type="term" value="F:tRNA binding"/>
    <property type="evidence" value="ECO:0007669"/>
    <property type="project" value="InterPro"/>
</dbReference>
<dbReference type="GO" id="GO:0008270">
    <property type="term" value="F:zinc ion binding"/>
    <property type="evidence" value="ECO:0007669"/>
    <property type="project" value="UniProtKB-UniRule"/>
</dbReference>
<dbReference type="GO" id="GO:0006428">
    <property type="term" value="P:isoleucyl-tRNA aminoacylation"/>
    <property type="evidence" value="ECO:0007669"/>
    <property type="project" value="UniProtKB-UniRule"/>
</dbReference>
<dbReference type="CDD" id="cd07960">
    <property type="entry name" value="Anticodon_Ia_Ile_BEm"/>
    <property type="match status" value="1"/>
</dbReference>
<dbReference type="CDD" id="cd00818">
    <property type="entry name" value="IleRS_core"/>
    <property type="match status" value="1"/>
</dbReference>
<dbReference type="FunFam" id="1.10.730.20:FF:000001">
    <property type="entry name" value="Isoleucine--tRNA ligase"/>
    <property type="match status" value="1"/>
</dbReference>
<dbReference type="FunFam" id="3.40.50.620:FF:000042">
    <property type="entry name" value="Isoleucine--tRNA ligase"/>
    <property type="match status" value="1"/>
</dbReference>
<dbReference type="FunFam" id="3.40.50.620:FF:000048">
    <property type="entry name" value="Isoleucine--tRNA ligase"/>
    <property type="match status" value="1"/>
</dbReference>
<dbReference type="Gene3D" id="1.10.730.20">
    <property type="match status" value="1"/>
</dbReference>
<dbReference type="Gene3D" id="3.40.50.620">
    <property type="entry name" value="HUPs"/>
    <property type="match status" value="2"/>
</dbReference>
<dbReference type="Gene3D" id="3.90.740.10">
    <property type="entry name" value="Valyl/Leucyl/Isoleucyl-tRNA synthetase, editing domain"/>
    <property type="match status" value="1"/>
</dbReference>
<dbReference type="HAMAP" id="MF_02002">
    <property type="entry name" value="Ile_tRNA_synth_type1"/>
    <property type="match status" value="1"/>
</dbReference>
<dbReference type="InterPro" id="IPR001412">
    <property type="entry name" value="aa-tRNA-synth_I_CS"/>
</dbReference>
<dbReference type="InterPro" id="IPR002300">
    <property type="entry name" value="aa-tRNA-synth_Ia"/>
</dbReference>
<dbReference type="InterPro" id="IPR033708">
    <property type="entry name" value="Anticodon_Ile_BEm"/>
</dbReference>
<dbReference type="InterPro" id="IPR002301">
    <property type="entry name" value="Ile-tRNA-ligase"/>
</dbReference>
<dbReference type="InterPro" id="IPR023585">
    <property type="entry name" value="Ile-tRNA-ligase_type1"/>
</dbReference>
<dbReference type="InterPro" id="IPR050081">
    <property type="entry name" value="Ile-tRNA_ligase"/>
</dbReference>
<dbReference type="InterPro" id="IPR013155">
    <property type="entry name" value="M/V/L/I-tRNA-synth_anticd-bd"/>
</dbReference>
<dbReference type="InterPro" id="IPR014729">
    <property type="entry name" value="Rossmann-like_a/b/a_fold"/>
</dbReference>
<dbReference type="InterPro" id="IPR009080">
    <property type="entry name" value="tRNAsynth_Ia_anticodon-bd"/>
</dbReference>
<dbReference type="InterPro" id="IPR009008">
    <property type="entry name" value="Val/Leu/Ile-tRNA-synth_edit"/>
</dbReference>
<dbReference type="InterPro" id="IPR010663">
    <property type="entry name" value="Znf_FPG/IleRS"/>
</dbReference>
<dbReference type="NCBIfam" id="TIGR00392">
    <property type="entry name" value="ileS"/>
    <property type="match status" value="1"/>
</dbReference>
<dbReference type="PANTHER" id="PTHR42765:SF1">
    <property type="entry name" value="ISOLEUCINE--TRNA LIGASE, MITOCHONDRIAL"/>
    <property type="match status" value="1"/>
</dbReference>
<dbReference type="PANTHER" id="PTHR42765">
    <property type="entry name" value="SOLEUCYL-TRNA SYNTHETASE"/>
    <property type="match status" value="1"/>
</dbReference>
<dbReference type="Pfam" id="PF08264">
    <property type="entry name" value="Anticodon_1"/>
    <property type="match status" value="1"/>
</dbReference>
<dbReference type="Pfam" id="PF00133">
    <property type="entry name" value="tRNA-synt_1"/>
    <property type="match status" value="1"/>
</dbReference>
<dbReference type="Pfam" id="PF06827">
    <property type="entry name" value="zf-FPG_IleRS"/>
    <property type="match status" value="1"/>
</dbReference>
<dbReference type="PRINTS" id="PR00984">
    <property type="entry name" value="TRNASYNTHILE"/>
</dbReference>
<dbReference type="SUPFAM" id="SSF47323">
    <property type="entry name" value="Anticodon-binding domain of a subclass of class I aminoacyl-tRNA synthetases"/>
    <property type="match status" value="1"/>
</dbReference>
<dbReference type="SUPFAM" id="SSF52374">
    <property type="entry name" value="Nucleotidylyl transferase"/>
    <property type="match status" value="1"/>
</dbReference>
<dbReference type="SUPFAM" id="SSF50677">
    <property type="entry name" value="ValRS/IleRS/LeuRS editing domain"/>
    <property type="match status" value="1"/>
</dbReference>
<dbReference type="PROSITE" id="PS00178">
    <property type="entry name" value="AA_TRNA_LIGASE_I"/>
    <property type="match status" value="1"/>
</dbReference>
<feature type="chain" id="PRO_0000098356" description="Isoleucine--tRNA ligase">
    <location>
        <begin position="1"/>
        <end position="942"/>
    </location>
</feature>
<feature type="short sequence motif" description="'HIGH' region">
    <location>
        <begin position="58"/>
        <end position="68"/>
    </location>
</feature>
<feature type="short sequence motif" description="'KMSKS' region">
    <location>
        <begin position="605"/>
        <end position="609"/>
    </location>
</feature>
<feature type="binding site" evidence="1">
    <location>
        <position position="564"/>
    </location>
    <ligand>
        <name>L-isoleucyl-5'-AMP</name>
        <dbReference type="ChEBI" id="CHEBI:178002"/>
    </ligand>
</feature>
<feature type="binding site" evidence="1">
    <location>
        <position position="608"/>
    </location>
    <ligand>
        <name>ATP</name>
        <dbReference type="ChEBI" id="CHEBI:30616"/>
    </ligand>
</feature>
<feature type="binding site" evidence="1">
    <location>
        <position position="905"/>
    </location>
    <ligand>
        <name>Zn(2+)</name>
        <dbReference type="ChEBI" id="CHEBI:29105"/>
    </ligand>
</feature>
<feature type="binding site" evidence="1">
    <location>
        <position position="908"/>
    </location>
    <ligand>
        <name>Zn(2+)</name>
        <dbReference type="ChEBI" id="CHEBI:29105"/>
    </ligand>
</feature>
<feature type="binding site" evidence="1">
    <location>
        <position position="925"/>
    </location>
    <ligand>
        <name>Zn(2+)</name>
        <dbReference type="ChEBI" id="CHEBI:29105"/>
    </ligand>
</feature>
<feature type="binding site" evidence="1">
    <location>
        <position position="928"/>
    </location>
    <ligand>
        <name>Zn(2+)</name>
        <dbReference type="ChEBI" id="CHEBI:29105"/>
    </ligand>
</feature>
<protein>
    <recommendedName>
        <fullName evidence="1">Isoleucine--tRNA ligase</fullName>
        <ecNumber evidence="1">6.1.1.5</ecNumber>
    </recommendedName>
    <alternativeName>
        <fullName evidence="1">Isoleucyl-tRNA synthetase</fullName>
        <shortName evidence="1">IleRS</shortName>
    </alternativeName>
</protein>
<gene>
    <name evidence="1" type="primary">ileS</name>
    <name type="ordered locus">BPEN_122</name>
</gene>